<protein>
    <recommendedName>
        <fullName evidence="1">Bifunctional protein HldE</fullName>
    </recommendedName>
    <domain>
        <recommendedName>
            <fullName evidence="1">D-beta-D-heptose 7-phosphate kinase</fullName>
            <ecNumber evidence="1">2.7.1.167</ecNumber>
        </recommendedName>
        <alternativeName>
            <fullName evidence="1">D-beta-D-heptose 7-phosphotransferase</fullName>
        </alternativeName>
        <alternativeName>
            <fullName evidence="1">D-glycero-beta-D-manno-heptose-7-phosphate kinase</fullName>
        </alternativeName>
    </domain>
    <domain>
        <recommendedName>
            <fullName evidence="1">D-beta-D-heptose 1-phosphate adenylyltransferase</fullName>
            <ecNumber evidence="1">2.7.7.70</ecNumber>
        </recommendedName>
        <alternativeName>
            <fullName evidence="1">D-glycero-beta-D-manno-heptose 1-phosphate adenylyltransferase</fullName>
        </alternativeName>
    </domain>
</protein>
<evidence type="ECO:0000255" key="1">
    <source>
        <dbReference type="HAMAP-Rule" id="MF_01603"/>
    </source>
</evidence>
<gene>
    <name evidence="1" type="primary">hldE</name>
    <name type="synonym">rfaE</name>
    <name type="ordered locus">PSEEN4986</name>
</gene>
<proteinExistence type="inferred from homology"/>
<name>HLDE_PSEE4</name>
<comment type="function">
    <text evidence="1">Catalyzes the phosphorylation of D-glycero-D-manno-heptose 7-phosphate at the C-1 position to selectively form D-glycero-beta-D-manno-heptose-1,7-bisphosphate.</text>
</comment>
<comment type="function">
    <text evidence="1">Catalyzes the ADP transfer from ATP to D-glycero-beta-D-manno-heptose 1-phosphate, yielding ADP-D-glycero-beta-D-manno-heptose.</text>
</comment>
<comment type="catalytic activity">
    <reaction evidence="1">
        <text>D-glycero-beta-D-manno-heptose 7-phosphate + ATP = D-glycero-beta-D-manno-heptose 1,7-bisphosphate + ADP + H(+)</text>
        <dbReference type="Rhea" id="RHEA:27473"/>
        <dbReference type="ChEBI" id="CHEBI:15378"/>
        <dbReference type="ChEBI" id="CHEBI:30616"/>
        <dbReference type="ChEBI" id="CHEBI:60204"/>
        <dbReference type="ChEBI" id="CHEBI:60208"/>
        <dbReference type="ChEBI" id="CHEBI:456216"/>
        <dbReference type="EC" id="2.7.1.167"/>
    </reaction>
</comment>
<comment type="catalytic activity">
    <reaction evidence="1">
        <text>D-glycero-beta-D-manno-heptose 1-phosphate + ATP + H(+) = ADP-D-glycero-beta-D-manno-heptose + diphosphate</text>
        <dbReference type="Rhea" id="RHEA:27465"/>
        <dbReference type="ChEBI" id="CHEBI:15378"/>
        <dbReference type="ChEBI" id="CHEBI:30616"/>
        <dbReference type="ChEBI" id="CHEBI:33019"/>
        <dbReference type="ChEBI" id="CHEBI:59967"/>
        <dbReference type="ChEBI" id="CHEBI:61593"/>
        <dbReference type="EC" id="2.7.7.70"/>
    </reaction>
</comment>
<comment type="pathway">
    <text evidence="1">Nucleotide-sugar biosynthesis; ADP-L-glycero-beta-D-manno-heptose biosynthesis; ADP-L-glycero-beta-D-manno-heptose from D-glycero-beta-D-manno-heptose 7-phosphate: step 1/4.</text>
</comment>
<comment type="pathway">
    <text evidence="1">Nucleotide-sugar biosynthesis; ADP-L-glycero-beta-D-manno-heptose biosynthesis; ADP-L-glycero-beta-D-manno-heptose from D-glycero-beta-D-manno-heptose 7-phosphate: step 3/4.</text>
</comment>
<comment type="subunit">
    <text evidence="1">Homodimer.</text>
</comment>
<comment type="similarity">
    <text evidence="1">In the N-terminal section; belongs to the carbohydrate kinase PfkB family.</text>
</comment>
<comment type="similarity">
    <text evidence="1">In the C-terminal section; belongs to the cytidylyltransferase family.</text>
</comment>
<sequence>MKLSMPRFDQAPVLVVGDVMLDRYWHGGTSRISPEAPVPVVKVDQIEDRPGGAANVALNIAALGAPASLVGVTGQDEAADSLANSLQAAGVRSIFQRIAHQPTIVKLRVMSRHQQLLRIDFEEPFATDPLSLGEEVEGLLEGVKVLVLSDYGKGALRNHQALIQAARQKQIPVLADPKGKDFSIYRGASLITPNLSEFEAIVGRCADEAELVAKGLKLLEELDLGALLVTRGEHGMTLLRVGHPALHLPARAREVFDVTGAGDTVISTLAAAIAAGEDLPHAVALANLAAGIVVGKLGTAAISAPELRRAIQREEGSERGVLSLEQLLLAIDDARAHNETIVFTNGCFDILHAGHVTYLEQARAQGDRLIVAINDDASVSRLKGPGRPINSVDRRMAVLAGLGAVDWVISFPEATPENLLRQVKPDVLVKGGDYGIDQVVGADIVKAYGGTVKVLGLVENSSTTAIVEKIRKH</sequence>
<keyword id="KW-0067">ATP-binding</keyword>
<keyword id="KW-0119">Carbohydrate metabolism</keyword>
<keyword id="KW-0418">Kinase</keyword>
<keyword id="KW-0511">Multifunctional enzyme</keyword>
<keyword id="KW-0547">Nucleotide-binding</keyword>
<keyword id="KW-0548">Nucleotidyltransferase</keyword>
<keyword id="KW-0808">Transferase</keyword>
<reference key="1">
    <citation type="journal article" date="2006" name="Nat. Biotechnol.">
        <title>Complete genome sequence of the entomopathogenic and metabolically versatile soil bacterium Pseudomonas entomophila.</title>
        <authorList>
            <person name="Vodovar N."/>
            <person name="Vallenet D."/>
            <person name="Cruveiller S."/>
            <person name="Rouy Z."/>
            <person name="Barbe V."/>
            <person name="Acosta C."/>
            <person name="Cattolico L."/>
            <person name="Jubin C."/>
            <person name="Lajus A."/>
            <person name="Segurens B."/>
            <person name="Vacherie B."/>
            <person name="Wincker P."/>
            <person name="Weissenbach J."/>
            <person name="Lemaitre B."/>
            <person name="Medigue C."/>
            <person name="Boccard F."/>
        </authorList>
    </citation>
    <scope>NUCLEOTIDE SEQUENCE [LARGE SCALE GENOMIC DNA]</scope>
    <source>
        <strain>L48</strain>
    </source>
</reference>
<dbReference type="EC" id="2.7.1.167" evidence="1"/>
<dbReference type="EC" id="2.7.7.70" evidence="1"/>
<dbReference type="EMBL" id="CT573326">
    <property type="protein sequence ID" value="CAK17625.1"/>
    <property type="molecule type" value="Genomic_DNA"/>
</dbReference>
<dbReference type="RefSeq" id="WP_011535985.1">
    <property type="nucleotide sequence ID" value="NC_008027.1"/>
</dbReference>
<dbReference type="SMR" id="Q1I411"/>
<dbReference type="STRING" id="384676.PSEEN4986"/>
<dbReference type="GeneID" id="32807929"/>
<dbReference type="KEGG" id="pen:PSEEN4986"/>
<dbReference type="eggNOG" id="COG0615">
    <property type="taxonomic scope" value="Bacteria"/>
</dbReference>
<dbReference type="eggNOG" id="COG2870">
    <property type="taxonomic scope" value="Bacteria"/>
</dbReference>
<dbReference type="HOGENOM" id="CLU_021150_2_1_6"/>
<dbReference type="OrthoDB" id="9802794at2"/>
<dbReference type="UniPathway" id="UPA00356">
    <property type="reaction ID" value="UER00437"/>
</dbReference>
<dbReference type="UniPathway" id="UPA00356">
    <property type="reaction ID" value="UER00439"/>
</dbReference>
<dbReference type="Proteomes" id="UP000000658">
    <property type="component" value="Chromosome"/>
</dbReference>
<dbReference type="GO" id="GO:0005829">
    <property type="term" value="C:cytosol"/>
    <property type="evidence" value="ECO:0007669"/>
    <property type="project" value="TreeGrafter"/>
</dbReference>
<dbReference type="GO" id="GO:0005524">
    <property type="term" value="F:ATP binding"/>
    <property type="evidence" value="ECO:0007669"/>
    <property type="project" value="UniProtKB-UniRule"/>
</dbReference>
<dbReference type="GO" id="GO:0033785">
    <property type="term" value="F:heptose 7-phosphate kinase activity"/>
    <property type="evidence" value="ECO:0007669"/>
    <property type="project" value="UniProtKB-UniRule"/>
</dbReference>
<dbReference type="GO" id="GO:0033786">
    <property type="term" value="F:heptose-1-phosphate adenylyltransferase activity"/>
    <property type="evidence" value="ECO:0007669"/>
    <property type="project" value="UniProtKB-UniRule"/>
</dbReference>
<dbReference type="GO" id="GO:0016773">
    <property type="term" value="F:phosphotransferase activity, alcohol group as acceptor"/>
    <property type="evidence" value="ECO:0007669"/>
    <property type="project" value="InterPro"/>
</dbReference>
<dbReference type="GO" id="GO:0097171">
    <property type="term" value="P:ADP-L-glycero-beta-D-manno-heptose biosynthetic process"/>
    <property type="evidence" value="ECO:0007669"/>
    <property type="project" value="UniProtKB-UniPathway"/>
</dbReference>
<dbReference type="CDD" id="cd01172">
    <property type="entry name" value="RfaE_like"/>
    <property type="match status" value="1"/>
</dbReference>
<dbReference type="FunFam" id="3.40.1190.20:FF:000002">
    <property type="entry name" value="Bifunctional protein HldE"/>
    <property type="match status" value="1"/>
</dbReference>
<dbReference type="FunFam" id="3.40.50.620:FF:000028">
    <property type="entry name" value="Bifunctional protein HldE"/>
    <property type="match status" value="1"/>
</dbReference>
<dbReference type="Gene3D" id="3.40.1190.20">
    <property type="match status" value="1"/>
</dbReference>
<dbReference type="Gene3D" id="3.40.50.620">
    <property type="entry name" value="HUPs"/>
    <property type="match status" value="1"/>
</dbReference>
<dbReference type="HAMAP" id="MF_01603">
    <property type="entry name" value="HldE"/>
    <property type="match status" value="1"/>
</dbReference>
<dbReference type="InterPro" id="IPR023030">
    <property type="entry name" value="Bifunc_HldE"/>
</dbReference>
<dbReference type="InterPro" id="IPR002173">
    <property type="entry name" value="Carboh/pur_kinase_PfkB_CS"/>
</dbReference>
<dbReference type="InterPro" id="IPR004821">
    <property type="entry name" value="Cyt_trans-like"/>
</dbReference>
<dbReference type="InterPro" id="IPR011611">
    <property type="entry name" value="PfkB_dom"/>
</dbReference>
<dbReference type="InterPro" id="IPR011913">
    <property type="entry name" value="RfaE_dom_I"/>
</dbReference>
<dbReference type="InterPro" id="IPR011914">
    <property type="entry name" value="RfaE_dom_II"/>
</dbReference>
<dbReference type="InterPro" id="IPR029056">
    <property type="entry name" value="Ribokinase-like"/>
</dbReference>
<dbReference type="InterPro" id="IPR014729">
    <property type="entry name" value="Rossmann-like_a/b/a_fold"/>
</dbReference>
<dbReference type="NCBIfam" id="TIGR00125">
    <property type="entry name" value="cyt_tran_rel"/>
    <property type="match status" value="1"/>
</dbReference>
<dbReference type="NCBIfam" id="NF008454">
    <property type="entry name" value="PRK11316.1"/>
    <property type="match status" value="1"/>
</dbReference>
<dbReference type="NCBIfam" id="TIGR02198">
    <property type="entry name" value="rfaE_dom_I"/>
    <property type="match status" value="1"/>
</dbReference>
<dbReference type="NCBIfam" id="TIGR02199">
    <property type="entry name" value="rfaE_dom_II"/>
    <property type="match status" value="1"/>
</dbReference>
<dbReference type="PANTHER" id="PTHR46969">
    <property type="entry name" value="BIFUNCTIONAL PROTEIN HLDE"/>
    <property type="match status" value="1"/>
</dbReference>
<dbReference type="PANTHER" id="PTHR46969:SF1">
    <property type="entry name" value="BIFUNCTIONAL PROTEIN HLDE"/>
    <property type="match status" value="1"/>
</dbReference>
<dbReference type="Pfam" id="PF01467">
    <property type="entry name" value="CTP_transf_like"/>
    <property type="match status" value="1"/>
</dbReference>
<dbReference type="Pfam" id="PF00294">
    <property type="entry name" value="PfkB"/>
    <property type="match status" value="1"/>
</dbReference>
<dbReference type="SUPFAM" id="SSF52374">
    <property type="entry name" value="Nucleotidylyl transferase"/>
    <property type="match status" value="1"/>
</dbReference>
<dbReference type="SUPFAM" id="SSF53613">
    <property type="entry name" value="Ribokinase-like"/>
    <property type="match status" value="1"/>
</dbReference>
<dbReference type="PROSITE" id="PS00583">
    <property type="entry name" value="PFKB_KINASES_1"/>
    <property type="match status" value="1"/>
</dbReference>
<organism>
    <name type="scientific">Pseudomonas entomophila (strain L48)</name>
    <dbReference type="NCBI Taxonomy" id="384676"/>
    <lineage>
        <taxon>Bacteria</taxon>
        <taxon>Pseudomonadati</taxon>
        <taxon>Pseudomonadota</taxon>
        <taxon>Gammaproteobacteria</taxon>
        <taxon>Pseudomonadales</taxon>
        <taxon>Pseudomonadaceae</taxon>
        <taxon>Pseudomonas</taxon>
    </lineage>
</organism>
<feature type="chain" id="PRO_0000291682" description="Bifunctional protein HldE">
    <location>
        <begin position="1"/>
        <end position="473"/>
    </location>
</feature>
<feature type="region of interest" description="Ribokinase">
    <location>
        <begin position="1"/>
        <end position="318"/>
    </location>
</feature>
<feature type="region of interest" description="Cytidylyltransferase">
    <location>
        <begin position="343"/>
        <end position="473"/>
    </location>
</feature>
<feature type="active site" evidence="1">
    <location>
        <position position="263"/>
    </location>
</feature>
<feature type="binding site" evidence="1">
    <location>
        <begin position="194"/>
        <end position="197"/>
    </location>
    <ligand>
        <name>ATP</name>
        <dbReference type="ChEBI" id="CHEBI:30616"/>
    </ligand>
</feature>
<accession>Q1I411</accession>